<sequence>MKFSELWLREWVNPAISSETLSDQITMIGLEVDGVEAVAGQFHGVVVGEVVQCAQHPNADKLRVTKVNVGGERLLDIVCGAPNCRLGLKVAVATVGAVLPGDFKIKAAKLRGEPSEGMLCSFSELGISEDHDGIIELPIDAPLGVDLREYLKLDDKVIEISITPNRADCLSIIGVARDVAVANKMPLSEPQIEAVKPTTDAIFPIRVEATEACPRYLGRVIKNINVKAATPQWMREKLRRGGIRSIDPIVDVTNYVLLELGQPLHAFDLERLNGSITVRMAKQDEKLVLLDGTEANLSTDTLVISDEKQAVAMAGIFGGEHSGVNEETQNILLECAFFAPLAIAGRARRYGLHTDASHRYERGVDPQLQHKAIERTTQLLIDICGGEAGPIIDVTDESQLPQSATITLRREKLDRLIGHYIPDEQVGDILTHLGCKVTIQENCWQAVAPSWRFDVEIEEDLVEEVARIYGYNNIPDVPIRADLIMKKHRETDLSLQRVKTVLVDRGYQEAITYSFVDPKIQALLHPQQQALMLPNPISADMSAMRLSLLTGLLTTVVYNQNRQQNRVRLFETGLRFVPDENADQGIRQELMLGGVITGNRFEEHWSLEKQSVDFFDMKGDLEAVLELTGKLSKISFRADVNPALHPGQSAGIYLENEYIGYIGVVHPELERKLDLNGRTVVFEVLWNKLASRVVPDAKEISRFPSNRRDIAIVVPENVAVEDVLAECKKVGVNHIVGINLFDVYCGKGVAEGHKSLAISFILQDTARTLEEEEIAATINKCVAVLKQRFQASLRD</sequence>
<protein>
    <recommendedName>
        <fullName evidence="1">Phenylalanine--tRNA ligase beta subunit</fullName>
        <ecNumber evidence="1">6.1.1.20</ecNumber>
    </recommendedName>
    <alternativeName>
        <fullName evidence="1">Phenylalanyl-tRNA synthetase beta subunit</fullName>
        <shortName evidence="1">PheRS</shortName>
    </alternativeName>
</protein>
<feature type="chain" id="PRO_0000126925" description="Phenylalanine--tRNA ligase beta subunit">
    <location>
        <begin position="1"/>
        <end position="795"/>
    </location>
</feature>
<feature type="domain" description="tRNA-binding" evidence="1">
    <location>
        <begin position="39"/>
        <end position="148"/>
    </location>
</feature>
<feature type="domain" description="B5" evidence="1">
    <location>
        <begin position="401"/>
        <end position="476"/>
    </location>
</feature>
<feature type="domain" description="FDX-ACB" evidence="1">
    <location>
        <begin position="701"/>
        <end position="794"/>
    </location>
</feature>
<feature type="binding site" evidence="1">
    <location>
        <position position="454"/>
    </location>
    <ligand>
        <name>Mg(2+)</name>
        <dbReference type="ChEBI" id="CHEBI:18420"/>
        <note>shared with alpha subunit</note>
    </ligand>
</feature>
<feature type="binding site" evidence="1">
    <location>
        <position position="460"/>
    </location>
    <ligand>
        <name>Mg(2+)</name>
        <dbReference type="ChEBI" id="CHEBI:18420"/>
        <note>shared with alpha subunit</note>
    </ligand>
</feature>
<feature type="binding site" evidence="1">
    <location>
        <position position="463"/>
    </location>
    <ligand>
        <name>Mg(2+)</name>
        <dbReference type="ChEBI" id="CHEBI:18420"/>
        <note>shared with alpha subunit</note>
    </ligand>
</feature>
<feature type="binding site" evidence="1">
    <location>
        <position position="464"/>
    </location>
    <ligand>
        <name>Mg(2+)</name>
        <dbReference type="ChEBI" id="CHEBI:18420"/>
        <note>shared with alpha subunit</note>
    </ligand>
</feature>
<keyword id="KW-0030">Aminoacyl-tRNA synthetase</keyword>
<keyword id="KW-0067">ATP-binding</keyword>
<keyword id="KW-0963">Cytoplasm</keyword>
<keyword id="KW-0436">Ligase</keyword>
<keyword id="KW-0460">Magnesium</keyword>
<keyword id="KW-0479">Metal-binding</keyword>
<keyword id="KW-0547">Nucleotide-binding</keyword>
<keyword id="KW-0648">Protein biosynthesis</keyword>
<keyword id="KW-1185">Reference proteome</keyword>
<keyword id="KW-0694">RNA-binding</keyword>
<keyword id="KW-0820">tRNA-binding</keyword>
<accession>Q7N3Q1</accession>
<reference key="1">
    <citation type="journal article" date="2003" name="Nat. Biotechnol.">
        <title>The genome sequence of the entomopathogenic bacterium Photorhabdus luminescens.</title>
        <authorList>
            <person name="Duchaud E."/>
            <person name="Rusniok C."/>
            <person name="Frangeul L."/>
            <person name="Buchrieser C."/>
            <person name="Givaudan A."/>
            <person name="Taourit S."/>
            <person name="Bocs S."/>
            <person name="Boursaux-Eude C."/>
            <person name="Chandler M."/>
            <person name="Charles J.-F."/>
            <person name="Dassa E."/>
            <person name="Derose R."/>
            <person name="Derzelle S."/>
            <person name="Freyssinet G."/>
            <person name="Gaudriault S."/>
            <person name="Medigue C."/>
            <person name="Lanois A."/>
            <person name="Powell K."/>
            <person name="Siguier P."/>
            <person name="Vincent R."/>
            <person name="Wingate V."/>
            <person name="Zouine M."/>
            <person name="Glaser P."/>
            <person name="Boemare N."/>
            <person name="Danchin A."/>
            <person name="Kunst F."/>
        </authorList>
    </citation>
    <scope>NUCLEOTIDE SEQUENCE [LARGE SCALE GENOMIC DNA]</scope>
    <source>
        <strain>DSM 15139 / CIP 105565 / TT01</strain>
    </source>
</reference>
<comment type="catalytic activity">
    <reaction evidence="1">
        <text>tRNA(Phe) + L-phenylalanine + ATP = L-phenylalanyl-tRNA(Phe) + AMP + diphosphate + H(+)</text>
        <dbReference type="Rhea" id="RHEA:19413"/>
        <dbReference type="Rhea" id="RHEA-COMP:9668"/>
        <dbReference type="Rhea" id="RHEA-COMP:9699"/>
        <dbReference type="ChEBI" id="CHEBI:15378"/>
        <dbReference type="ChEBI" id="CHEBI:30616"/>
        <dbReference type="ChEBI" id="CHEBI:33019"/>
        <dbReference type="ChEBI" id="CHEBI:58095"/>
        <dbReference type="ChEBI" id="CHEBI:78442"/>
        <dbReference type="ChEBI" id="CHEBI:78531"/>
        <dbReference type="ChEBI" id="CHEBI:456215"/>
        <dbReference type="EC" id="6.1.1.20"/>
    </reaction>
</comment>
<comment type="cofactor">
    <cofactor evidence="1">
        <name>Mg(2+)</name>
        <dbReference type="ChEBI" id="CHEBI:18420"/>
    </cofactor>
    <text evidence="1">Binds 2 magnesium ions per tetramer.</text>
</comment>
<comment type="subunit">
    <text evidence="1">Tetramer of two alpha and two beta subunits.</text>
</comment>
<comment type="subcellular location">
    <subcellularLocation>
        <location evidence="1">Cytoplasm</location>
    </subcellularLocation>
</comment>
<comment type="similarity">
    <text evidence="1">Belongs to the phenylalanyl-tRNA synthetase beta subunit family. Type 1 subfamily.</text>
</comment>
<gene>
    <name evidence="1" type="primary">pheT</name>
    <name type="ordered locus">plu2664</name>
</gene>
<dbReference type="EC" id="6.1.1.20" evidence="1"/>
<dbReference type="EMBL" id="BX571867">
    <property type="protein sequence ID" value="CAE15038.1"/>
    <property type="molecule type" value="Genomic_DNA"/>
</dbReference>
<dbReference type="RefSeq" id="WP_011146886.1">
    <property type="nucleotide sequence ID" value="NC_005126.1"/>
</dbReference>
<dbReference type="SMR" id="Q7N3Q1"/>
<dbReference type="STRING" id="243265.plu2664"/>
<dbReference type="GeneID" id="48848927"/>
<dbReference type="KEGG" id="plu:plu2664"/>
<dbReference type="eggNOG" id="COG0072">
    <property type="taxonomic scope" value="Bacteria"/>
</dbReference>
<dbReference type="eggNOG" id="COG0073">
    <property type="taxonomic scope" value="Bacteria"/>
</dbReference>
<dbReference type="HOGENOM" id="CLU_016891_0_0_6"/>
<dbReference type="OrthoDB" id="9805455at2"/>
<dbReference type="Proteomes" id="UP000002514">
    <property type="component" value="Chromosome"/>
</dbReference>
<dbReference type="GO" id="GO:0009328">
    <property type="term" value="C:phenylalanine-tRNA ligase complex"/>
    <property type="evidence" value="ECO:0007669"/>
    <property type="project" value="TreeGrafter"/>
</dbReference>
<dbReference type="GO" id="GO:0005524">
    <property type="term" value="F:ATP binding"/>
    <property type="evidence" value="ECO:0007669"/>
    <property type="project" value="UniProtKB-UniRule"/>
</dbReference>
<dbReference type="GO" id="GO:0000287">
    <property type="term" value="F:magnesium ion binding"/>
    <property type="evidence" value="ECO:0007669"/>
    <property type="project" value="UniProtKB-UniRule"/>
</dbReference>
<dbReference type="GO" id="GO:0004826">
    <property type="term" value="F:phenylalanine-tRNA ligase activity"/>
    <property type="evidence" value="ECO:0007669"/>
    <property type="project" value="UniProtKB-UniRule"/>
</dbReference>
<dbReference type="GO" id="GO:0000049">
    <property type="term" value="F:tRNA binding"/>
    <property type="evidence" value="ECO:0007669"/>
    <property type="project" value="UniProtKB-KW"/>
</dbReference>
<dbReference type="GO" id="GO:0006432">
    <property type="term" value="P:phenylalanyl-tRNA aminoacylation"/>
    <property type="evidence" value="ECO:0007669"/>
    <property type="project" value="UniProtKB-UniRule"/>
</dbReference>
<dbReference type="CDD" id="cd00769">
    <property type="entry name" value="PheRS_beta_core"/>
    <property type="match status" value="1"/>
</dbReference>
<dbReference type="CDD" id="cd02796">
    <property type="entry name" value="tRNA_bind_bactPheRS"/>
    <property type="match status" value="1"/>
</dbReference>
<dbReference type="FunFam" id="2.40.50.140:FF:000045">
    <property type="entry name" value="Phenylalanine--tRNA ligase beta subunit"/>
    <property type="match status" value="1"/>
</dbReference>
<dbReference type="FunFam" id="3.30.56.10:FF:000002">
    <property type="entry name" value="Phenylalanine--tRNA ligase beta subunit"/>
    <property type="match status" value="1"/>
</dbReference>
<dbReference type="FunFam" id="3.30.70.380:FF:000001">
    <property type="entry name" value="Phenylalanine--tRNA ligase beta subunit"/>
    <property type="match status" value="1"/>
</dbReference>
<dbReference type="FunFam" id="3.30.930.10:FF:000022">
    <property type="entry name" value="Phenylalanine--tRNA ligase beta subunit"/>
    <property type="match status" value="1"/>
</dbReference>
<dbReference type="FunFam" id="3.50.40.10:FF:000001">
    <property type="entry name" value="Phenylalanine--tRNA ligase beta subunit"/>
    <property type="match status" value="1"/>
</dbReference>
<dbReference type="Gene3D" id="3.30.56.10">
    <property type="match status" value="2"/>
</dbReference>
<dbReference type="Gene3D" id="3.30.930.10">
    <property type="entry name" value="Bira Bifunctional Protein, Domain 2"/>
    <property type="match status" value="1"/>
</dbReference>
<dbReference type="Gene3D" id="3.30.70.380">
    <property type="entry name" value="Ferrodoxin-fold anticodon-binding domain"/>
    <property type="match status" value="1"/>
</dbReference>
<dbReference type="Gene3D" id="2.40.50.140">
    <property type="entry name" value="Nucleic acid-binding proteins"/>
    <property type="match status" value="1"/>
</dbReference>
<dbReference type="Gene3D" id="3.50.40.10">
    <property type="entry name" value="Phenylalanyl-trna Synthetase, Chain B, domain 3"/>
    <property type="match status" value="1"/>
</dbReference>
<dbReference type="HAMAP" id="MF_00283">
    <property type="entry name" value="Phe_tRNA_synth_beta1"/>
    <property type="match status" value="1"/>
</dbReference>
<dbReference type="InterPro" id="IPR045864">
    <property type="entry name" value="aa-tRNA-synth_II/BPL/LPL"/>
</dbReference>
<dbReference type="InterPro" id="IPR005146">
    <property type="entry name" value="B3/B4_tRNA-bd"/>
</dbReference>
<dbReference type="InterPro" id="IPR009061">
    <property type="entry name" value="DNA-bd_dom_put_sf"/>
</dbReference>
<dbReference type="InterPro" id="IPR005121">
    <property type="entry name" value="Fdx_antiC-bd"/>
</dbReference>
<dbReference type="InterPro" id="IPR036690">
    <property type="entry name" value="Fdx_antiC-bd_sf"/>
</dbReference>
<dbReference type="InterPro" id="IPR012340">
    <property type="entry name" value="NA-bd_OB-fold"/>
</dbReference>
<dbReference type="InterPro" id="IPR045060">
    <property type="entry name" value="Phe-tRNA-ligase_IIc_bsu"/>
</dbReference>
<dbReference type="InterPro" id="IPR004532">
    <property type="entry name" value="Phe-tRNA-ligase_IIc_bsu_bact"/>
</dbReference>
<dbReference type="InterPro" id="IPR020825">
    <property type="entry name" value="Phe-tRNA_synthase-like_B3/B4"/>
</dbReference>
<dbReference type="InterPro" id="IPR041616">
    <property type="entry name" value="PheRS_beta_core"/>
</dbReference>
<dbReference type="InterPro" id="IPR002547">
    <property type="entry name" value="tRNA-bd_dom"/>
</dbReference>
<dbReference type="InterPro" id="IPR033714">
    <property type="entry name" value="tRNA_bind_bactPheRS"/>
</dbReference>
<dbReference type="InterPro" id="IPR005147">
    <property type="entry name" value="tRNA_synthase_B5-dom"/>
</dbReference>
<dbReference type="NCBIfam" id="TIGR00472">
    <property type="entry name" value="pheT_bact"/>
    <property type="match status" value="1"/>
</dbReference>
<dbReference type="NCBIfam" id="NF045760">
    <property type="entry name" value="YtpR"/>
    <property type="match status" value="1"/>
</dbReference>
<dbReference type="PANTHER" id="PTHR10947:SF0">
    <property type="entry name" value="PHENYLALANINE--TRNA LIGASE BETA SUBUNIT"/>
    <property type="match status" value="1"/>
</dbReference>
<dbReference type="PANTHER" id="PTHR10947">
    <property type="entry name" value="PHENYLALANYL-TRNA SYNTHETASE BETA CHAIN AND LEUCINE-RICH REPEAT-CONTAINING PROTEIN 47"/>
    <property type="match status" value="1"/>
</dbReference>
<dbReference type="Pfam" id="PF03483">
    <property type="entry name" value="B3_4"/>
    <property type="match status" value="1"/>
</dbReference>
<dbReference type="Pfam" id="PF03484">
    <property type="entry name" value="B5"/>
    <property type="match status" value="1"/>
</dbReference>
<dbReference type="Pfam" id="PF03147">
    <property type="entry name" value="FDX-ACB"/>
    <property type="match status" value="1"/>
</dbReference>
<dbReference type="Pfam" id="PF01588">
    <property type="entry name" value="tRNA_bind"/>
    <property type="match status" value="1"/>
</dbReference>
<dbReference type="Pfam" id="PF17759">
    <property type="entry name" value="tRNA_synthFbeta"/>
    <property type="match status" value="1"/>
</dbReference>
<dbReference type="SMART" id="SM00873">
    <property type="entry name" value="B3_4"/>
    <property type="match status" value="1"/>
</dbReference>
<dbReference type="SMART" id="SM00874">
    <property type="entry name" value="B5"/>
    <property type="match status" value="1"/>
</dbReference>
<dbReference type="SMART" id="SM00896">
    <property type="entry name" value="FDX-ACB"/>
    <property type="match status" value="1"/>
</dbReference>
<dbReference type="SUPFAM" id="SSF54991">
    <property type="entry name" value="Anticodon-binding domain of PheRS"/>
    <property type="match status" value="1"/>
</dbReference>
<dbReference type="SUPFAM" id="SSF55681">
    <property type="entry name" value="Class II aaRS and biotin synthetases"/>
    <property type="match status" value="1"/>
</dbReference>
<dbReference type="SUPFAM" id="SSF50249">
    <property type="entry name" value="Nucleic acid-binding proteins"/>
    <property type="match status" value="1"/>
</dbReference>
<dbReference type="SUPFAM" id="SSF56037">
    <property type="entry name" value="PheT/TilS domain"/>
    <property type="match status" value="1"/>
</dbReference>
<dbReference type="SUPFAM" id="SSF46955">
    <property type="entry name" value="Putative DNA-binding domain"/>
    <property type="match status" value="1"/>
</dbReference>
<dbReference type="PROSITE" id="PS51483">
    <property type="entry name" value="B5"/>
    <property type="match status" value="1"/>
</dbReference>
<dbReference type="PROSITE" id="PS51447">
    <property type="entry name" value="FDX_ACB"/>
    <property type="match status" value="1"/>
</dbReference>
<dbReference type="PROSITE" id="PS50886">
    <property type="entry name" value="TRBD"/>
    <property type="match status" value="1"/>
</dbReference>
<evidence type="ECO:0000255" key="1">
    <source>
        <dbReference type="HAMAP-Rule" id="MF_00283"/>
    </source>
</evidence>
<organism>
    <name type="scientific">Photorhabdus laumondii subsp. laumondii (strain DSM 15139 / CIP 105565 / TT01)</name>
    <name type="common">Photorhabdus luminescens subsp. laumondii</name>
    <dbReference type="NCBI Taxonomy" id="243265"/>
    <lineage>
        <taxon>Bacteria</taxon>
        <taxon>Pseudomonadati</taxon>
        <taxon>Pseudomonadota</taxon>
        <taxon>Gammaproteobacteria</taxon>
        <taxon>Enterobacterales</taxon>
        <taxon>Morganellaceae</taxon>
        <taxon>Photorhabdus</taxon>
    </lineage>
</organism>
<proteinExistence type="inferred from homology"/>
<name>SYFB_PHOLL</name>